<name>RPOA_CHLTR</name>
<comment type="function">
    <text evidence="1">DNA-dependent RNA polymerase catalyzes the transcription of DNA into RNA using the four ribonucleoside triphosphates as substrates.</text>
</comment>
<comment type="catalytic activity">
    <reaction evidence="1">
        <text>RNA(n) + a ribonucleoside 5'-triphosphate = RNA(n+1) + diphosphate</text>
        <dbReference type="Rhea" id="RHEA:21248"/>
        <dbReference type="Rhea" id="RHEA-COMP:14527"/>
        <dbReference type="Rhea" id="RHEA-COMP:17342"/>
        <dbReference type="ChEBI" id="CHEBI:33019"/>
        <dbReference type="ChEBI" id="CHEBI:61557"/>
        <dbReference type="ChEBI" id="CHEBI:140395"/>
        <dbReference type="EC" id="2.7.7.6"/>
    </reaction>
</comment>
<comment type="subunit">
    <text evidence="1">Homodimer. The RNAP catalytic core consists of 2 alpha, 1 beta, 1 beta' and 1 omega subunit. When a sigma factor is associated with the core the holoenzyme is formed, which can initiate transcription.</text>
</comment>
<comment type="domain">
    <text evidence="1">The N-terminal domain is essential for RNAP assembly and basal transcription, whereas the C-terminal domain is involved in interaction with transcriptional regulators and with upstream promoter elements.</text>
</comment>
<comment type="similarity">
    <text evidence="1">Belongs to the RNA polymerase alpha chain family.</text>
</comment>
<proteinExistence type="inferred from homology"/>
<feature type="chain" id="PRO_0000175292" description="DNA-directed RNA polymerase subunit alpha">
    <location>
        <begin position="1"/>
        <end position="377"/>
    </location>
</feature>
<feature type="region of interest" description="Alpha N-terminal domain (alpha-NTD)" evidence="1">
    <location>
        <begin position="1"/>
        <end position="259"/>
    </location>
</feature>
<feature type="region of interest" description="Alpha C-terminal domain (alpha-CTD)" evidence="1">
    <location>
        <begin position="276"/>
        <end position="377"/>
    </location>
</feature>
<dbReference type="EC" id="2.7.7.6" evidence="1"/>
<dbReference type="EMBL" id="AE001273">
    <property type="protein sequence ID" value="AAC68108.1"/>
    <property type="molecule type" value="Genomic_DNA"/>
</dbReference>
<dbReference type="PIR" id="A71505">
    <property type="entry name" value="A71505"/>
</dbReference>
<dbReference type="RefSeq" id="NP_220022.1">
    <property type="nucleotide sequence ID" value="NC_000117.1"/>
</dbReference>
<dbReference type="RefSeq" id="WP_009871871.1">
    <property type="nucleotide sequence ID" value="NC_000117.1"/>
</dbReference>
<dbReference type="SMR" id="P0CE08"/>
<dbReference type="FunCoup" id="P0CE08">
    <property type="interactions" value="224"/>
</dbReference>
<dbReference type="STRING" id="272561.CT_507"/>
<dbReference type="EnsemblBacteria" id="AAC68108">
    <property type="protein sequence ID" value="AAC68108"/>
    <property type="gene ID" value="CT_507"/>
</dbReference>
<dbReference type="GeneID" id="884283"/>
<dbReference type="KEGG" id="ctr:CT_507"/>
<dbReference type="PATRIC" id="fig|272561.5.peg.551"/>
<dbReference type="HOGENOM" id="CLU_053084_0_1_0"/>
<dbReference type="InParanoid" id="P0CE08"/>
<dbReference type="OrthoDB" id="9805706at2"/>
<dbReference type="Proteomes" id="UP000000431">
    <property type="component" value="Chromosome"/>
</dbReference>
<dbReference type="GO" id="GO:0005737">
    <property type="term" value="C:cytoplasm"/>
    <property type="evidence" value="ECO:0000318"/>
    <property type="project" value="GO_Central"/>
</dbReference>
<dbReference type="GO" id="GO:0000428">
    <property type="term" value="C:DNA-directed RNA polymerase complex"/>
    <property type="evidence" value="ECO:0007669"/>
    <property type="project" value="UniProtKB-KW"/>
</dbReference>
<dbReference type="GO" id="GO:0003677">
    <property type="term" value="F:DNA binding"/>
    <property type="evidence" value="ECO:0007669"/>
    <property type="project" value="UniProtKB-UniRule"/>
</dbReference>
<dbReference type="GO" id="GO:0003899">
    <property type="term" value="F:DNA-directed RNA polymerase activity"/>
    <property type="evidence" value="ECO:0007669"/>
    <property type="project" value="UniProtKB-UniRule"/>
</dbReference>
<dbReference type="GO" id="GO:0046983">
    <property type="term" value="F:protein dimerization activity"/>
    <property type="evidence" value="ECO:0007669"/>
    <property type="project" value="InterPro"/>
</dbReference>
<dbReference type="GO" id="GO:0006351">
    <property type="term" value="P:DNA-templated transcription"/>
    <property type="evidence" value="ECO:0007669"/>
    <property type="project" value="UniProtKB-UniRule"/>
</dbReference>
<dbReference type="CDD" id="cd06928">
    <property type="entry name" value="RNAP_alpha_NTD"/>
    <property type="match status" value="1"/>
</dbReference>
<dbReference type="FunFam" id="1.10.150.20:FF:000078">
    <property type="entry name" value="DNA-directed RNA polymerase subunit alpha"/>
    <property type="match status" value="1"/>
</dbReference>
<dbReference type="FunFam" id="2.170.120.12:FF:000014">
    <property type="entry name" value="DNA-directed RNA polymerase subunit alpha"/>
    <property type="match status" value="1"/>
</dbReference>
<dbReference type="Gene3D" id="1.10.150.20">
    <property type="entry name" value="5' to 3' exonuclease, C-terminal subdomain"/>
    <property type="match status" value="1"/>
</dbReference>
<dbReference type="Gene3D" id="2.170.120.12">
    <property type="entry name" value="DNA-directed RNA polymerase, insert domain"/>
    <property type="match status" value="1"/>
</dbReference>
<dbReference type="Gene3D" id="3.30.1360.10">
    <property type="entry name" value="RNA polymerase, RBP11-like subunit"/>
    <property type="match status" value="1"/>
</dbReference>
<dbReference type="HAMAP" id="MF_00059">
    <property type="entry name" value="RNApol_bact_RpoA"/>
    <property type="match status" value="1"/>
</dbReference>
<dbReference type="InterPro" id="IPR011262">
    <property type="entry name" value="DNA-dir_RNA_pol_insert"/>
</dbReference>
<dbReference type="InterPro" id="IPR011263">
    <property type="entry name" value="DNA-dir_RNA_pol_RpoA/D/Rpb3"/>
</dbReference>
<dbReference type="InterPro" id="IPR011773">
    <property type="entry name" value="DNA-dir_RpoA"/>
</dbReference>
<dbReference type="InterPro" id="IPR036603">
    <property type="entry name" value="RBP11-like"/>
</dbReference>
<dbReference type="InterPro" id="IPR011260">
    <property type="entry name" value="RNAP_asu_C"/>
</dbReference>
<dbReference type="InterPro" id="IPR036643">
    <property type="entry name" value="RNApol_insert_sf"/>
</dbReference>
<dbReference type="NCBIfam" id="NF003513">
    <property type="entry name" value="PRK05182.1-2"/>
    <property type="match status" value="1"/>
</dbReference>
<dbReference type="NCBIfam" id="NF003517">
    <property type="entry name" value="PRK05182.2-3"/>
    <property type="match status" value="1"/>
</dbReference>
<dbReference type="NCBIfam" id="NF003519">
    <property type="entry name" value="PRK05182.2-5"/>
    <property type="match status" value="1"/>
</dbReference>
<dbReference type="NCBIfam" id="TIGR02027">
    <property type="entry name" value="rpoA"/>
    <property type="match status" value="1"/>
</dbReference>
<dbReference type="Pfam" id="PF01000">
    <property type="entry name" value="RNA_pol_A_bac"/>
    <property type="match status" value="1"/>
</dbReference>
<dbReference type="Pfam" id="PF03118">
    <property type="entry name" value="RNA_pol_A_CTD"/>
    <property type="match status" value="1"/>
</dbReference>
<dbReference type="Pfam" id="PF01193">
    <property type="entry name" value="RNA_pol_L"/>
    <property type="match status" value="1"/>
</dbReference>
<dbReference type="SMART" id="SM00662">
    <property type="entry name" value="RPOLD"/>
    <property type="match status" value="1"/>
</dbReference>
<dbReference type="SUPFAM" id="SSF47789">
    <property type="entry name" value="C-terminal domain of RNA polymerase alpha subunit"/>
    <property type="match status" value="1"/>
</dbReference>
<dbReference type="SUPFAM" id="SSF56553">
    <property type="entry name" value="Insert subdomain of RNA polymerase alpha subunit"/>
    <property type="match status" value="1"/>
</dbReference>
<dbReference type="SUPFAM" id="SSF55257">
    <property type="entry name" value="RBP11-like subunits of RNA polymerase"/>
    <property type="match status" value="1"/>
</dbReference>
<accession>P0CE08</accession>
<accession>O84515</accession>
<accession>Q46449</accession>
<organism>
    <name type="scientific">Chlamydia trachomatis serovar D (strain ATCC VR-885 / DSM 19411 / UW-3/Cx)</name>
    <dbReference type="NCBI Taxonomy" id="272561"/>
    <lineage>
        <taxon>Bacteria</taxon>
        <taxon>Pseudomonadati</taxon>
        <taxon>Chlamydiota</taxon>
        <taxon>Chlamydiia</taxon>
        <taxon>Chlamydiales</taxon>
        <taxon>Chlamydiaceae</taxon>
        <taxon>Chlamydia/Chlamydophila group</taxon>
        <taxon>Chlamydia</taxon>
    </lineage>
</organism>
<reference key="1">
    <citation type="journal article" date="1998" name="Science">
        <title>Genome sequence of an obligate intracellular pathogen of humans: Chlamydia trachomatis.</title>
        <authorList>
            <person name="Stephens R.S."/>
            <person name="Kalman S."/>
            <person name="Lammel C.J."/>
            <person name="Fan J."/>
            <person name="Marathe R."/>
            <person name="Aravind L."/>
            <person name="Mitchell W.P."/>
            <person name="Olinger L."/>
            <person name="Tatusov R.L."/>
            <person name="Zhao Q."/>
            <person name="Koonin E.V."/>
            <person name="Davis R.W."/>
        </authorList>
    </citation>
    <scope>NUCLEOTIDE SEQUENCE [LARGE SCALE GENOMIC DNA]</scope>
    <source>
        <strain>ATCC VR-885 / DSM 19411 / UW-3/Cx</strain>
    </source>
</reference>
<protein>
    <recommendedName>
        <fullName evidence="1">DNA-directed RNA polymerase subunit alpha</fullName>
        <shortName evidence="1">RNAP subunit alpha</shortName>
        <ecNumber evidence="1">2.7.7.6</ecNumber>
    </recommendedName>
    <alternativeName>
        <fullName evidence="1">RNA polymerase subunit alpha</fullName>
    </alternativeName>
    <alternativeName>
        <fullName evidence="1">Transcriptase subunit alpha</fullName>
    </alternativeName>
</protein>
<gene>
    <name evidence="1" type="primary">rpoA</name>
    <name type="ordered locus">CT_507</name>
</gene>
<evidence type="ECO:0000255" key="1">
    <source>
        <dbReference type="HAMAP-Rule" id="MF_00059"/>
    </source>
</evidence>
<keyword id="KW-0240">DNA-directed RNA polymerase</keyword>
<keyword id="KW-0548">Nucleotidyltransferase</keyword>
<keyword id="KW-1185">Reference proteome</keyword>
<keyword id="KW-0804">Transcription</keyword>
<keyword id="KW-0808">Transferase</keyword>
<sequence>MSDSSHNLLYNKFELPESVKMSPVEGAVGGIDKVARFVADPLEKGMGHTLGSALRRALLIGLEAPAIVSFSMTGVLHEYMAVEGIIEDVTNIVLNLKGSLLKKYPLQDCEGGRCSQKLRATISIDASDLAAAGGQKEVTLGDLLQEGTFEAVNPEHVIFTVTRPMQLEVMLRVAFGRGYSPSERIVLEERGMNEIVLDAAFSPVVLVNYFVEDTRVGQDTDFDRLVLQVETDGRVAPKEAVAFATQILSKHFSVFEKMDEKRIVFEEAISVEKENKDDILHKLVLGINEIELSVRSTNCLSNANIETIGELVIMPEPRLLQFRNFGKKSLCEIKNKLKEMKLELGMDLSQFGVGLDNVKEKMKWYAEKIRSSKNTKG</sequence>